<proteinExistence type="evidence at protein level"/>
<feature type="initiator methionine" description="Removed" evidence="2">
    <location>
        <position position="1"/>
    </location>
</feature>
<feature type="chain" id="PRO_0000077305" description="Type II restriction enzyme EcoRV">
    <location>
        <begin position="2"/>
        <end position="245"/>
    </location>
</feature>
<feature type="active site">
    <location>
        <position position="74"/>
    </location>
</feature>
<feature type="active site">
    <location>
        <position position="90"/>
    </location>
</feature>
<feature type="active site">
    <location>
        <position position="92"/>
    </location>
</feature>
<feature type="binding site">
    <location>
        <position position="45"/>
    </location>
    <ligand>
        <name>Mg(2+)</name>
        <dbReference type="ChEBI" id="CHEBI:18420"/>
        <label>2</label>
    </ligand>
</feature>
<feature type="binding site">
    <location>
        <position position="74"/>
    </location>
    <ligand>
        <name>Mg(2+)</name>
        <dbReference type="ChEBI" id="CHEBI:18420"/>
        <label>1</label>
    </ligand>
</feature>
<feature type="binding site">
    <location>
        <position position="74"/>
    </location>
    <ligand>
        <name>Mg(2+)</name>
        <dbReference type="ChEBI" id="CHEBI:18420"/>
        <label>2</label>
    </ligand>
</feature>
<feature type="binding site">
    <location>
        <position position="90"/>
    </location>
    <ligand>
        <name>Mg(2+)</name>
        <dbReference type="ChEBI" id="CHEBI:18420"/>
        <label>1</label>
    </ligand>
</feature>
<feature type="mutagenesis site" description="Decrease in activity." evidence="1">
    <original>N</original>
    <variation>Q</variation>
    <location>
        <position position="70"/>
    </location>
</feature>
<feature type="mutagenesis site" description="Loss of activity." evidence="1">
    <original>P</original>
    <variation>A</variation>
    <variation>G</variation>
    <location>
        <position position="73"/>
    </location>
</feature>
<feature type="mutagenesis site" description="Loss of activity." evidence="1">
    <original>D</original>
    <variation>A</variation>
    <location>
        <position position="74"/>
    </location>
</feature>
<feature type="mutagenesis site" description="Decrease in activity." evidence="1">
    <original>D</original>
    <variation>E</variation>
    <location>
        <position position="74"/>
    </location>
</feature>
<feature type="mutagenesis site" description="Loss of activity." evidence="1">
    <original>D</original>
    <variation>A</variation>
    <variation>N</variation>
    <variation>E</variation>
    <variation>T</variation>
    <location>
        <position position="90"/>
    </location>
</feature>
<feature type="mutagenesis site" description="Loss of activity." evidence="1">
    <original>K</original>
    <variation>E</variation>
    <location>
        <position position="92"/>
    </location>
</feature>
<feature type="mutagenesis site" description="Weak, non-specific phosphodiesterase activity." evidence="1">
    <location>
        <begin position="183"/>
        <end position="188"/>
    </location>
</feature>
<feature type="mutagenesis site" description="Decrease in activity." evidence="1">
    <original>S</original>
    <variation>A</variation>
    <variation>T</variation>
    <location>
        <position position="183"/>
    </location>
</feature>
<feature type="mutagenesis site" description="Loss of activity." evidence="1">
    <original>S</original>
    <variation>I</variation>
    <location>
        <position position="183"/>
    </location>
</feature>
<feature type="mutagenesis site" description="Loss of activity." evidence="1">
    <original>N</original>
    <variation>D</variation>
    <variation>A</variation>
    <variation>Q</variation>
    <location>
        <position position="185"/>
    </location>
</feature>
<feature type="mutagenesis site" description="Loss of activity." evidence="1">
    <original>T</original>
    <variation>S</variation>
    <variation>N</variation>
    <location>
        <position position="186"/>
    </location>
</feature>
<feature type="mutagenesis site" description="No loss of activity." evidence="1">
    <original>T</original>
    <variation>S</variation>
    <variation>N</variation>
    <location>
        <position position="187"/>
    </location>
</feature>
<feature type="mutagenesis site" description="Decrease in activity." evidence="1">
    <original>N</original>
    <variation>A</variation>
    <variation>Q</variation>
    <variation>T</variation>
    <location>
        <position position="188"/>
    </location>
</feature>
<feature type="mutagenesis site" description="Loss of activity." evidence="1">
    <original>N</original>
    <variation>D</variation>
    <location>
        <position position="188"/>
    </location>
</feature>
<feature type="mutagenesis site" description="No loss of activity." evidence="1">
    <original>G</original>
    <variation>A</variation>
    <location>
        <position position="190"/>
    </location>
</feature>
<feature type="mutagenesis site" description="Loss of activity." evidence="1">
    <location>
        <begin position="216"/>
        <end position="245"/>
    </location>
</feature>
<feature type="helix" evidence="16">
    <location>
        <begin position="3"/>
        <end position="17"/>
    </location>
</feature>
<feature type="strand" evidence="16">
    <location>
        <begin position="20"/>
        <end position="25"/>
    </location>
</feature>
<feature type="strand" evidence="16">
    <location>
        <begin position="30"/>
        <end position="32"/>
    </location>
</feature>
<feature type="helix" evidence="16">
    <location>
        <begin position="37"/>
        <end position="58"/>
    </location>
</feature>
<feature type="strand" evidence="16">
    <location>
        <begin position="62"/>
        <end position="64"/>
    </location>
</feature>
<feature type="strand" evidence="14">
    <location>
        <begin position="67"/>
        <end position="70"/>
    </location>
</feature>
<feature type="strand" evidence="16">
    <location>
        <begin position="74"/>
        <end position="78"/>
    </location>
</feature>
<feature type="strand" evidence="16">
    <location>
        <begin position="86"/>
        <end position="98"/>
    </location>
</feature>
<feature type="strand" evidence="16">
    <location>
        <begin position="106"/>
        <end position="112"/>
    </location>
</feature>
<feature type="turn" evidence="16">
    <location>
        <begin position="113"/>
        <end position="115"/>
    </location>
</feature>
<feature type="strand" evidence="15">
    <location>
        <begin position="116"/>
        <end position="118"/>
    </location>
</feature>
<feature type="strand" evidence="16">
    <location>
        <begin position="119"/>
        <end position="123"/>
    </location>
</feature>
<feature type="helix" evidence="16">
    <location>
        <begin position="125"/>
        <end position="127"/>
    </location>
</feature>
<feature type="strand" evidence="16">
    <location>
        <begin position="128"/>
        <end position="140"/>
    </location>
</feature>
<feature type="turn" evidence="16">
    <location>
        <begin position="145"/>
        <end position="148"/>
    </location>
</feature>
<feature type="helix" evidence="16">
    <location>
        <begin position="153"/>
        <end position="158"/>
    </location>
</feature>
<feature type="strand" evidence="16">
    <location>
        <begin position="162"/>
        <end position="172"/>
    </location>
</feature>
<feature type="helix" evidence="16">
    <location>
        <begin position="173"/>
        <end position="176"/>
    </location>
</feature>
<feature type="strand" evidence="12">
    <location>
        <begin position="177"/>
        <end position="183"/>
    </location>
</feature>
<feature type="turn" evidence="16">
    <location>
        <begin position="184"/>
        <end position="187"/>
    </location>
</feature>
<feature type="strand" evidence="16">
    <location>
        <begin position="188"/>
        <end position="191"/>
    </location>
</feature>
<feature type="helix" evidence="16">
    <location>
        <begin position="196"/>
        <end position="201"/>
    </location>
</feature>
<feature type="helix" evidence="16">
    <location>
        <begin position="209"/>
        <end position="217"/>
    </location>
</feature>
<feature type="helix" evidence="16">
    <location>
        <begin position="223"/>
        <end position="226"/>
    </location>
</feature>
<feature type="strand" evidence="13">
    <location>
        <begin position="227"/>
        <end position="229"/>
    </location>
</feature>
<feature type="helix" evidence="16">
    <location>
        <begin position="233"/>
        <end position="241"/>
    </location>
</feature>
<reference key="1">
    <citation type="journal article" date="1984" name="Nucleic Acids Res.">
        <title>Characterization of the genes coding for the Eco RV restriction and modification system of Escherichia coli.</title>
        <authorList>
            <person name="Bougueleret L."/>
            <person name="Schwarzstein M."/>
            <person name="Tsugita A."/>
            <person name="Zabeau M."/>
        </authorList>
    </citation>
    <scope>NUCLEOTIDE SEQUENCE [GENOMIC DNA]</scope>
    <scope>PROTEIN SEQUENCE OF 2-35; 38-40 AND 235-245</scope>
    <scope>FUNCTION</scope>
    <source>
        <strain>J62</strain>
        <plasmid evidence="6">pLB1</plasmid>
    </source>
</reference>
<reference key="2">
    <citation type="journal article" date="1985" name="Mol. Biol. (Mosk.)">
        <title>The EcoRV restriction-modification system: genes, enzymes, synthetic substrates.</title>
        <authorList>
            <person name="Kraev A.S."/>
            <person name="Kravets A.N."/>
            <person name="Chernov B.K."/>
            <person name="Skryabin K.G."/>
            <person name="Baev A.A."/>
        </authorList>
    </citation>
    <scope>NUCLEOTIDE SEQUENCE [GENOMIC DNA]</scope>
    <scope>FUNCTION</scope>
    <scope>CATALYTIC ACTIVITY</scope>
    <source>
        <plasmid evidence="7">pLG13</plasmid>
    </source>
</reference>
<reference key="3">
    <citation type="journal article" date="1991" name="Biochemistry">
        <title>Site-directed mutagenesis studies with EcoRV restriction endonuclease to identify regions involved in recognition and catalysis.</title>
        <authorList>
            <person name="Thielking V."/>
            <person name="Selent U."/>
            <person name="Koehler E."/>
            <person name="Wolfes H."/>
            <person name="Pieper U."/>
            <person name="Geiger R."/>
            <person name="Urbanke C."/>
            <person name="Winkler F.K."/>
            <person name="Pingoud A."/>
        </authorList>
    </citation>
    <scope>FUNCTION</scope>
    <scope>CATALYTIC ACTIVITY</scope>
    <scope>SUBUNIT</scope>
    <scope>MUTAGENESIS OF ASN-70; PRO-73; ASP-74; ASP-90; LYS-92; 183-SER--ASN-188; SER-183; ASN-185; THR-186; THR-187; ASN-188; GLY-190 AND 216-TRP--LYS-245</scope>
</reference>
<reference key="4">
    <citation type="journal article" date="2003" name="Nucleic Acids Res.">
        <title>A nomenclature for restriction enzymes, DNA methyltransferases, homing endonucleases and their genes.</title>
        <authorList>
            <person name="Roberts R.J."/>
            <person name="Belfort M."/>
            <person name="Bestor T."/>
            <person name="Bhagwat A.S."/>
            <person name="Bickle T.A."/>
            <person name="Bitinaite J."/>
            <person name="Blumenthal R.M."/>
            <person name="Degtyarev S.K."/>
            <person name="Dryden D.T."/>
            <person name="Dybvig K."/>
            <person name="Firman K."/>
            <person name="Gromova E.S."/>
            <person name="Gumport R.I."/>
            <person name="Halford S.E."/>
            <person name="Hattman S."/>
            <person name="Heitman J."/>
            <person name="Hornby D.P."/>
            <person name="Janulaitis A."/>
            <person name="Jeltsch A."/>
            <person name="Josephsen J."/>
            <person name="Kiss A."/>
            <person name="Klaenhammer T.R."/>
            <person name="Kobayashi I."/>
            <person name="Kong H."/>
            <person name="Krueger D.H."/>
            <person name="Lacks S."/>
            <person name="Marinus M.G."/>
            <person name="Miyahara M."/>
            <person name="Morgan R.D."/>
            <person name="Murray N.E."/>
            <person name="Nagaraja V."/>
            <person name="Piekarowicz A."/>
            <person name="Pingoud A."/>
            <person name="Raleigh E."/>
            <person name="Rao D.N."/>
            <person name="Reich N."/>
            <person name="Repin V.E."/>
            <person name="Selker E.U."/>
            <person name="Shaw P.C."/>
            <person name="Stein D.C."/>
            <person name="Stoddard B.L."/>
            <person name="Szybalski W."/>
            <person name="Trautner T.A."/>
            <person name="Van Etten J.L."/>
            <person name="Vitor J.M."/>
            <person name="Wilson G.G."/>
            <person name="Xu S.Y."/>
        </authorList>
    </citation>
    <scope>NOMENCLATURE</scope>
    <scope>SUBTYPE</scope>
</reference>
<reference evidence="9 10 11" key="5">
    <citation type="journal article" date="1993" name="EMBO J.">
        <title>The crystal structure of EcoRV endonuclease and of its complexes with cognate and non-cognate DNA fragments.</title>
        <authorList>
            <person name="Winkler F.K."/>
            <person name="Banner D.W."/>
            <person name="Oefner C."/>
            <person name="Tsernoglou D."/>
            <person name="Brown R."/>
            <person name="Heathman S.P."/>
            <person name="Bryan R.K."/>
            <person name="Martin P.D."/>
            <person name="Petratos K."/>
            <person name="Wilson K.S."/>
        </authorList>
    </citation>
    <scope>X-RAY CRYSTALLOGRAPHY (3.0 ANGSTROMS) IN COMPLEX WITH DNA</scope>
    <scope>SUBUNIT</scope>
    <scope>DNA-BINDING</scope>
</reference>
<reference key="6">
    <citation type="journal article" date="1995" name="Biochemistry">
        <title>Mg2+ binding to the active site of EcoRV endonuclease: a crystallographic study of complexes with substrate and product DNA at 2 A resolution.</title>
        <authorList>
            <person name="Kostrewa D."/>
            <person name="Winkler F.K."/>
        </authorList>
    </citation>
    <scope>X-RAY CRYSTALLOGRAPHY (2.0 ANGSTROMS)</scope>
</reference>
<reference key="7">
    <citation type="journal article" date="1997" name="J. Mol. Biol.">
        <title>Conformational transitions and structural deformability of EcoRV endonuclease revealed by crystallographic analysis.</title>
        <authorList>
            <person name="Perona J.J."/>
            <person name="Martin A.M."/>
        </authorList>
    </citation>
    <scope>X-RAY CRYSTALLOGRAPHY (2.0 ANGSTROMS)</scope>
</reference>
<reference key="8">
    <citation type="journal article" date="1998" name="J. Biol. Chem.">
        <title>Recognition of flanking DNA sequences by EcoRV endonuclease involves alternative patterns of water-mediated contacts.</title>
        <authorList>
            <person name="Horton N.C."/>
            <person name="Perona J.J."/>
        </authorList>
    </citation>
    <scope>X-RAY CRYSTALLOGRAPHY (2.0 ANGSTROMS)</scope>
</reference>
<reference key="9">
    <citation type="journal article" date="1998" name="J. Mol. Biol.">
        <title>Role of protein-induced bending in the specificity of DNA recognition: crystal structure of EcoRV endonuclease complexed with d(AAAGAT) + d(ATCTT).</title>
        <authorList>
            <person name="Horton N.C."/>
            <person name="Perona J.J."/>
        </authorList>
    </citation>
    <scope>X-RAY CRYSTALLOGRAPHY (2.1 ANGSTROMS)</scope>
</reference>
<reference key="10">
    <citation type="journal article" date="1999" name="Nucleic Acids Res.">
        <title>Structural analysis of a mutational hot-spot in the EcoRV restriction endonuclease: a catalytic role for a main chain carbonyl group.</title>
        <authorList>
            <person name="Thomas M.P."/>
            <person name="Brady R.L."/>
            <person name="Halford S.E."/>
            <person name="Sessions R.B."/>
            <person name="Baldwin G.S."/>
        </authorList>
    </citation>
    <scope>X-RAY CRYSTALLOGRAPHY (2.3 ANGSTROMS) OF GLN-69 MUTANTS</scope>
</reference>
<organism>
    <name type="scientific">Escherichia coli</name>
    <dbReference type="NCBI Taxonomy" id="562"/>
    <lineage>
        <taxon>Bacteria</taxon>
        <taxon>Pseudomonadati</taxon>
        <taxon>Pseudomonadota</taxon>
        <taxon>Gammaproteobacteria</taxon>
        <taxon>Enterobacterales</taxon>
        <taxon>Enterobacteriaceae</taxon>
        <taxon>Escherichia</taxon>
    </lineage>
</organism>
<gene>
    <name type="primary">ecoRVR</name>
</gene>
<comment type="function">
    <text evidence="1 2 4 5">A P subtype restriction enzyme that recognizes the double-stranded sequence 5'-GATATC-3' and cleaves after T-3.</text>
</comment>
<comment type="catalytic activity">
    <reaction evidence="1 4">
        <text>Endonucleolytic cleavage of DNA to give specific double-stranded fragments with terminal 5'-phosphates.</text>
        <dbReference type="EC" id="3.1.21.4"/>
    </reaction>
</comment>
<comment type="cofactor">
    <cofactor>
        <name>Mg(2+)</name>
        <dbReference type="ChEBI" id="CHEBI:18420"/>
    </cofactor>
    <text>Binds 2 magnesium ions per subunit.</text>
</comment>
<comment type="subunit">
    <text evidence="3 8">Homodimer.</text>
</comment>
<dbReference type="EC" id="3.1.21.4" evidence="1"/>
<dbReference type="EMBL" id="X00530">
    <property type="protein sequence ID" value="CAA25208.1"/>
    <property type="molecule type" value="Genomic_DNA"/>
</dbReference>
<dbReference type="EMBL" id="M19941">
    <property type="protein sequence ID" value="AAA24615.1"/>
    <property type="molecule type" value="Genomic_DNA"/>
</dbReference>
<dbReference type="PIR" id="A00784">
    <property type="entry name" value="NDECR5"/>
</dbReference>
<dbReference type="RefSeq" id="NP_863580.1">
    <property type="nucleotide sequence ID" value="NC_005019.1"/>
</dbReference>
<dbReference type="RefSeq" id="WP_011117659.1">
    <property type="nucleotide sequence ID" value="NZ_VUDS01000061.1"/>
</dbReference>
<dbReference type="RefSeq" id="YP_007316617.1">
    <property type="nucleotide sequence ID" value="NC_019982.1"/>
</dbReference>
<dbReference type="PDB" id="1AZ0">
    <property type="method" value="X-ray"/>
    <property type="resolution" value="2.00 A"/>
    <property type="chains" value="A/B=2-245"/>
</dbReference>
<dbReference type="PDB" id="1AZ3">
    <property type="method" value="X-ray"/>
    <property type="resolution" value="2.40 A"/>
    <property type="chains" value="A/B=2-245"/>
</dbReference>
<dbReference type="PDB" id="1AZ4">
    <property type="method" value="X-ray"/>
    <property type="resolution" value="2.40 A"/>
    <property type="chains" value="A/B=2-245"/>
</dbReference>
<dbReference type="PDB" id="1B94">
    <property type="method" value="X-ray"/>
    <property type="resolution" value="1.90 A"/>
    <property type="chains" value="A/B=2-245"/>
</dbReference>
<dbReference type="PDB" id="1B95">
    <property type="method" value="X-ray"/>
    <property type="resolution" value="2.05 A"/>
    <property type="chains" value="A/B=2-245"/>
</dbReference>
<dbReference type="PDB" id="1B96">
    <property type="method" value="X-ray"/>
    <property type="resolution" value="2.30 A"/>
    <property type="chains" value="A/B=2-245"/>
</dbReference>
<dbReference type="PDB" id="1B97">
    <property type="method" value="X-ray"/>
    <property type="resolution" value="1.90 A"/>
    <property type="chains" value="A/B=2-245"/>
</dbReference>
<dbReference type="PDB" id="1BGB">
    <property type="method" value="X-ray"/>
    <property type="resolution" value="2.00 A"/>
    <property type="chains" value="A/B=2-245"/>
</dbReference>
<dbReference type="PDB" id="1BSS">
    <property type="method" value="X-ray"/>
    <property type="resolution" value="2.15 A"/>
    <property type="chains" value="A/B=2-245"/>
</dbReference>
<dbReference type="PDB" id="1BSU">
    <property type="method" value="X-ray"/>
    <property type="resolution" value="2.00 A"/>
    <property type="chains" value="A/B=2-245"/>
</dbReference>
<dbReference type="PDB" id="1BUA">
    <property type="method" value="X-ray"/>
    <property type="resolution" value="2.15 A"/>
    <property type="chains" value="A/B=2-245"/>
</dbReference>
<dbReference type="PDB" id="1EO3">
    <property type="method" value="X-ray"/>
    <property type="resolution" value="2.00 A"/>
    <property type="chains" value="A/B=1-245"/>
</dbReference>
<dbReference type="PDB" id="1EO4">
    <property type="method" value="X-ray"/>
    <property type="resolution" value="1.90 A"/>
    <property type="chains" value="A/B=1-245"/>
</dbReference>
<dbReference type="PDB" id="1EON">
    <property type="method" value="X-ray"/>
    <property type="resolution" value="1.60 A"/>
    <property type="chains" value="A/B=1-245"/>
</dbReference>
<dbReference type="PDB" id="1EOO">
    <property type="method" value="X-ray"/>
    <property type="resolution" value="2.16 A"/>
    <property type="chains" value="A/B=1-245"/>
</dbReference>
<dbReference type="PDB" id="1EOP">
    <property type="method" value="X-ray"/>
    <property type="resolution" value="2.60 A"/>
    <property type="chains" value="A/B=1-245"/>
</dbReference>
<dbReference type="PDB" id="1RV5">
    <property type="method" value="X-ray"/>
    <property type="resolution" value="2.10 A"/>
    <property type="chains" value="A/B=2-245"/>
</dbReference>
<dbReference type="PDB" id="1RVA">
    <property type="method" value="X-ray"/>
    <property type="resolution" value="2.00 A"/>
    <property type="chains" value="A/B=2-245"/>
</dbReference>
<dbReference type="PDB" id="1RVB">
    <property type="method" value="X-ray"/>
    <property type="resolution" value="2.10 A"/>
    <property type="chains" value="A/B=2-245"/>
</dbReference>
<dbReference type="PDB" id="1RVC">
    <property type="method" value="X-ray"/>
    <property type="resolution" value="2.10 A"/>
    <property type="chains" value="A/B=2-245"/>
</dbReference>
<dbReference type="PDB" id="1RVE">
    <property type="method" value="X-ray"/>
    <property type="resolution" value="2.50 A"/>
    <property type="chains" value="A/B=1-245"/>
</dbReference>
<dbReference type="PDB" id="1STX">
    <property type="method" value="X-ray"/>
    <property type="resolution" value="2.10 A"/>
    <property type="chains" value="A/B=2-245"/>
</dbReference>
<dbReference type="PDB" id="1SUZ">
    <property type="method" value="X-ray"/>
    <property type="resolution" value="1.80 A"/>
    <property type="chains" value="A/B=2-245"/>
</dbReference>
<dbReference type="PDB" id="1SX5">
    <property type="method" value="X-ray"/>
    <property type="resolution" value="1.50 A"/>
    <property type="chains" value="A/B=2-245"/>
</dbReference>
<dbReference type="PDB" id="1SX8">
    <property type="method" value="X-ray"/>
    <property type="resolution" value="2.15 A"/>
    <property type="chains" value="A/B=2-245"/>
</dbReference>
<dbReference type="PDB" id="2B0D">
    <property type="method" value="X-ray"/>
    <property type="resolution" value="2.00 A"/>
    <property type="chains" value="A/B=1-245"/>
</dbReference>
<dbReference type="PDB" id="2B0E">
    <property type="method" value="X-ray"/>
    <property type="resolution" value="1.90 A"/>
    <property type="chains" value="A/B=1-245"/>
</dbReference>
<dbReference type="PDB" id="2GE5">
    <property type="method" value="X-ray"/>
    <property type="resolution" value="2.40 A"/>
    <property type="chains" value="A/B=2-220"/>
</dbReference>
<dbReference type="PDB" id="2RVE">
    <property type="method" value="X-ray"/>
    <property type="resolution" value="3.00 A"/>
    <property type="chains" value="A/B=2-245"/>
</dbReference>
<dbReference type="PDB" id="4RVE">
    <property type="method" value="X-ray"/>
    <property type="resolution" value="3.00 A"/>
    <property type="chains" value="A/B/C=2-245"/>
</dbReference>
<dbReference type="PDB" id="5F8A">
    <property type="method" value="X-ray"/>
    <property type="resolution" value="1.76 A"/>
    <property type="chains" value="A/B=2-245"/>
</dbReference>
<dbReference type="PDB" id="5HLK">
    <property type="method" value="X-ray"/>
    <property type="resolution" value="2.00 A"/>
    <property type="chains" value="A/B=2-245"/>
</dbReference>
<dbReference type="PDBsum" id="1AZ0"/>
<dbReference type="PDBsum" id="1AZ3"/>
<dbReference type="PDBsum" id="1AZ4"/>
<dbReference type="PDBsum" id="1B94"/>
<dbReference type="PDBsum" id="1B95"/>
<dbReference type="PDBsum" id="1B96"/>
<dbReference type="PDBsum" id="1B97"/>
<dbReference type="PDBsum" id="1BGB"/>
<dbReference type="PDBsum" id="1BSS"/>
<dbReference type="PDBsum" id="1BSU"/>
<dbReference type="PDBsum" id="1BUA"/>
<dbReference type="PDBsum" id="1EO3"/>
<dbReference type="PDBsum" id="1EO4"/>
<dbReference type="PDBsum" id="1EON"/>
<dbReference type="PDBsum" id="1EOO"/>
<dbReference type="PDBsum" id="1EOP"/>
<dbReference type="PDBsum" id="1RV5"/>
<dbReference type="PDBsum" id="1RVA"/>
<dbReference type="PDBsum" id="1RVB"/>
<dbReference type="PDBsum" id="1RVC"/>
<dbReference type="PDBsum" id="1RVE"/>
<dbReference type="PDBsum" id="1STX"/>
<dbReference type="PDBsum" id="1SUZ"/>
<dbReference type="PDBsum" id="1SX5"/>
<dbReference type="PDBsum" id="1SX8"/>
<dbReference type="PDBsum" id="2B0D"/>
<dbReference type="PDBsum" id="2B0E"/>
<dbReference type="PDBsum" id="2GE5"/>
<dbReference type="PDBsum" id="2RVE"/>
<dbReference type="PDBsum" id="4RVE"/>
<dbReference type="PDBsum" id="5F8A"/>
<dbReference type="PDBsum" id="5HLK"/>
<dbReference type="SMR" id="P04390"/>
<dbReference type="DrugBank" id="DB08651">
    <property type="generic name" value="3'-THIO-THYMIDINE-5'-PHOSPHATE"/>
</dbReference>
<dbReference type="EvolutionaryTrace" id="P04390"/>
<dbReference type="PRO" id="PR:P04390"/>
<dbReference type="GO" id="GO:0003677">
    <property type="term" value="F:DNA binding"/>
    <property type="evidence" value="ECO:0007669"/>
    <property type="project" value="UniProtKB-KW"/>
</dbReference>
<dbReference type="GO" id="GO:0046872">
    <property type="term" value="F:metal ion binding"/>
    <property type="evidence" value="ECO:0007669"/>
    <property type="project" value="UniProtKB-KW"/>
</dbReference>
<dbReference type="GO" id="GO:0009036">
    <property type="term" value="F:type II site-specific deoxyribonuclease activity"/>
    <property type="evidence" value="ECO:0007669"/>
    <property type="project" value="UniProtKB-EC"/>
</dbReference>
<dbReference type="GO" id="GO:0009307">
    <property type="term" value="P:DNA restriction-modification system"/>
    <property type="evidence" value="ECO:0007669"/>
    <property type="project" value="UniProtKB-KW"/>
</dbReference>
<dbReference type="CDD" id="cd22323">
    <property type="entry name" value="EcoRV-like"/>
    <property type="match status" value="1"/>
</dbReference>
<dbReference type="Gene3D" id="3.40.600.10">
    <property type="entry name" value="DNA mismatch repair MutH/Restriction endonuclease, type II"/>
    <property type="match status" value="1"/>
</dbReference>
<dbReference type="InterPro" id="IPR037057">
    <property type="entry name" value="DNA_rep_MutH/T2_RE_sf"/>
</dbReference>
<dbReference type="InterPro" id="IPR011335">
    <property type="entry name" value="Restrct_endonuc-II-like"/>
</dbReference>
<dbReference type="InterPro" id="IPR015314">
    <property type="entry name" value="Restrct_endonuc_II_EcoRV"/>
</dbReference>
<dbReference type="InterPro" id="IPR019755">
    <property type="entry name" value="Restrct_endonuc_II_EcoRV_Pbac"/>
</dbReference>
<dbReference type="Pfam" id="PF09233">
    <property type="entry name" value="Endonuc-EcoRV"/>
    <property type="match status" value="1"/>
</dbReference>
<dbReference type="PIRSF" id="PIRSF000995">
    <property type="entry name" value="RE_EcoRV"/>
    <property type="match status" value="1"/>
</dbReference>
<dbReference type="SUPFAM" id="SSF52980">
    <property type="entry name" value="Restriction endonuclease-like"/>
    <property type="match status" value="1"/>
</dbReference>
<keyword id="KW-0002">3D-structure</keyword>
<keyword id="KW-0903">Direct protein sequencing</keyword>
<keyword id="KW-0238">DNA-binding</keyword>
<keyword id="KW-0255">Endonuclease</keyword>
<keyword id="KW-0378">Hydrolase</keyword>
<keyword id="KW-0460">Magnesium</keyword>
<keyword id="KW-0479">Metal-binding</keyword>
<keyword id="KW-0540">Nuclease</keyword>
<keyword id="KW-0614">Plasmid</keyword>
<keyword id="KW-0680">Restriction system</keyword>
<accession>P04390</accession>
<evidence type="ECO:0000269" key="1">
    <source>
    </source>
</evidence>
<evidence type="ECO:0000269" key="2">
    <source>
    </source>
</evidence>
<evidence type="ECO:0000269" key="3">
    <source>
    </source>
</evidence>
<evidence type="ECO:0000269" key="4">
    <source ref="2"/>
</evidence>
<evidence type="ECO:0000303" key="5">
    <source>
    </source>
</evidence>
<evidence type="ECO:0000303" key="6">
    <source>
    </source>
</evidence>
<evidence type="ECO:0000303" key="7">
    <source ref="2"/>
</evidence>
<evidence type="ECO:0000305" key="8">
    <source>
    </source>
</evidence>
<evidence type="ECO:0007744" key="9">
    <source>
        <dbReference type="PDB" id="1RVE"/>
    </source>
</evidence>
<evidence type="ECO:0007744" key="10">
    <source>
        <dbReference type="PDB" id="2RVE"/>
    </source>
</evidence>
<evidence type="ECO:0007744" key="11">
    <source>
        <dbReference type="PDB" id="4RVE"/>
    </source>
</evidence>
<evidence type="ECO:0007829" key="12">
    <source>
        <dbReference type="PDB" id="1B94"/>
    </source>
</evidence>
<evidence type="ECO:0007829" key="13">
    <source>
        <dbReference type="PDB" id="1B95"/>
    </source>
</evidence>
<evidence type="ECO:0007829" key="14">
    <source>
        <dbReference type="PDB" id="1EO4"/>
    </source>
</evidence>
<evidence type="ECO:0007829" key="15">
    <source>
        <dbReference type="PDB" id="1EOP"/>
    </source>
</evidence>
<evidence type="ECO:0007829" key="16">
    <source>
        <dbReference type="PDB" id="1SX5"/>
    </source>
</evidence>
<name>T2E5_ECOLX</name>
<protein>
    <recommendedName>
        <fullName evidence="5">Type II restriction enzyme EcoRV</fullName>
        <shortName>R.EcoRV</shortName>
        <ecNumber evidence="1">3.1.21.4</ecNumber>
    </recommendedName>
    <alternativeName>
        <fullName>Endonuclease EcoRV</fullName>
    </alternativeName>
    <alternativeName>
        <fullName>Type-2 restriction enzyme EcoRV</fullName>
    </alternativeName>
</protein>
<sequence length="245" mass="28650">MSLRSDLINALYDENQKYDVCGIISAEGKIYPLGSDTKVLSTIFELFSRPIINKIAEKHGYIVEEPKQQNHYPDFTLYKPSEPNKKIAIDIKTTYTNKENEKIKFTLGGYTSFIRNNTKNIVYPFDQYIAHWIIGYVYTRVATRKSSLKTYNINELNEIPKPYKGVKVFLQDKWVIAGDLAGSGNTTNIGSIHAHYKDFVEGKGIFDSEDEFLDYWRNYERTSQLRNDKYNNISEYRNWIYRGRK</sequence>
<geneLocation type="plasmid" evidence="6">
    <name>pLB1</name>
</geneLocation>
<geneLocation type="plasmid" evidence="7">
    <name>pLG13</name>
</geneLocation>